<sequence>MNLPFDDWLPQQRWYGGRSREFSSATADVVVTLRDDLDLVLLTVNYAEGRPEHYQILVRWDAAPIDEYSAVARIGSDTEHGERTGYDALYDPAAAHFLMTLIDSSAQVGDIRFAKEPEVTLPLQAAPRVSSAEQSNTSVIFDQDAILKVFRRITPGINPDIELNRVLARAGNPHVARLLGSFETTLDREPYALGMVTEFAANSAEGWDMALTSTRDLFAEGDLYADEVGGDFAGESHRLGEAVASVHSTLAAELGTSQVPFPLDTVLERLQSVADAVPELQPHAQSIEERYRKLADQEITVHRVHGDLHLGQVLRTTEGWLLIDFEGEPGQPLDERRRPDSPMRDVAGMLRSYEYAAYQRLIERGGDAQHDKQLAARAREWVNRNVSSFCDGYAAASGTDPRDHAELLAAYELDKAVYEVGYEARYRPSWLPIPMKSILRILGV</sequence>
<name>MAK_MYCSJ</name>
<protein>
    <recommendedName>
        <fullName>Maltokinase</fullName>
        <shortName>MaK</shortName>
        <ecNumber>2.7.1.175</ecNumber>
    </recommendedName>
    <alternativeName>
        <fullName>Maltose-1-phosphate synthase</fullName>
    </alternativeName>
</protein>
<accession>A3Q7Y6</accession>
<gene>
    <name type="primary">mak</name>
    <name type="ordered locus">Mjls_5500</name>
</gene>
<reference key="1">
    <citation type="submission" date="2007-02" db="EMBL/GenBank/DDBJ databases">
        <title>Complete sequence of Mycobacterium sp. JLS.</title>
        <authorList>
            <consortium name="US DOE Joint Genome Institute"/>
            <person name="Copeland A."/>
            <person name="Lucas S."/>
            <person name="Lapidus A."/>
            <person name="Barry K."/>
            <person name="Detter J.C."/>
            <person name="Glavina del Rio T."/>
            <person name="Hammon N."/>
            <person name="Israni S."/>
            <person name="Dalin E."/>
            <person name="Tice H."/>
            <person name="Pitluck S."/>
            <person name="Chain P."/>
            <person name="Malfatti S."/>
            <person name="Shin M."/>
            <person name="Vergez L."/>
            <person name="Schmutz J."/>
            <person name="Larimer F."/>
            <person name="Land M."/>
            <person name="Hauser L."/>
            <person name="Kyrpides N."/>
            <person name="Mikhailova N."/>
            <person name="Miller C.D."/>
            <person name="Anderson A.J."/>
            <person name="Sims R.C."/>
            <person name="Richardson P."/>
        </authorList>
    </citation>
    <scope>NUCLEOTIDE SEQUENCE [LARGE SCALE GENOMIC DNA]</scope>
    <source>
        <strain>JLS</strain>
    </source>
</reference>
<organism>
    <name type="scientific">Mycobacterium sp. (strain JLS)</name>
    <dbReference type="NCBI Taxonomy" id="164757"/>
    <lineage>
        <taxon>Bacteria</taxon>
        <taxon>Bacillati</taxon>
        <taxon>Actinomycetota</taxon>
        <taxon>Actinomycetes</taxon>
        <taxon>Mycobacteriales</taxon>
        <taxon>Mycobacteriaceae</taxon>
        <taxon>Mycobacterium</taxon>
    </lineage>
</organism>
<keyword id="KW-0067">ATP-binding</keyword>
<keyword id="KW-0119">Carbohydrate metabolism</keyword>
<keyword id="KW-0320">Glycogen biosynthesis</keyword>
<keyword id="KW-0321">Glycogen metabolism</keyword>
<keyword id="KW-0418">Kinase</keyword>
<keyword id="KW-0547">Nucleotide-binding</keyword>
<keyword id="KW-0808">Transferase</keyword>
<dbReference type="EC" id="2.7.1.175"/>
<dbReference type="EMBL" id="CP000580">
    <property type="protein sequence ID" value="ABO01264.1"/>
    <property type="molecule type" value="Genomic_DNA"/>
</dbReference>
<dbReference type="SMR" id="A3Q7Y6"/>
<dbReference type="KEGG" id="mjl:Mjls_5500"/>
<dbReference type="HOGENOM" id="CLU_029675_0_0_11"/>
<dbReference type="BioCyc" id="MSP164757:G1G8C-5562-MONOMER"/>
<dbReference type="UniPathway" id="UPA00164"/>
<dbReference type="GO" id="GO:0005524">
    <property type="term" value="F:ATP binding"/>
    <property type="evidence" value="ECO:0007669"/>
    <property type="project" value="UniProtKB-KW"/>
</dbReference>
<dbReference type="GO" id="GO:0016301">
    <property type="term" value="F:kinase activity"/>
    <property type="evidence" value="ECO:0007669"/>
    <property type="project" value="UniProtKB-KW"/>
</dbReference>
<dbReference type="GO" id="GO:0046835">
    <property type="term" value="P:carbohydrate phosphorylation"/>
    <property type="evidence" value="ECO:0000250"/>
    <property type="project" value="UniProtKB"/>
</dbReference>
<dbReference type="GO" id="GO:0005978">
    <property type="term" value="P:glycogen biosynthetic process"/>
    <property type="evidence" value="ECO:0007669"/>
    <property type="project" value="UniProtKB-UniPathway"/>
</dbReference>
<dbReference type="GO" id="GO:0005992">
    <property type="term" value="P:trehalose biosynthetic process"/>
    <property type="evidence" value="ECO:0000250"/>
    <property type="project" value="UniProtKB"/>
</dbReference>
<dbReference type="FunFam" id="3.90.1200.10:FF:000010">
    <property type="entry name" value="Maltokinase"/>
    <property type="match status" value="1"/>
</dbReference>
<dbReference type="Gene3D" id="3.90.1200.10">
    <property type="match status" value="1"/>
</dbReference>
<dbReference type="InterPro" id="IPR002575">
    <property type="entry name" value="Aminoglycoside_PTrfase"/>
</dbReference>
<dbReference type="InterPro" id="IPR011009">
    <property type="entry name" value="Kinase-like_dom_sf"/>
</dbReference>
<dbReference type="InterPro" id="IPR040999">
    <property type="entry name" value="Mak_N_cap"/>
</dbReference>
<dbReference type="Pfam" id="PF01636">
    <property type="entry name" value="APH"/>
    <property type="match status" value="1"/>
</dbReference>
<dbReference type="Pfam" id="PF18085">
    <property type="entry name" value="Mak_N_cap"/>
    <property type="match status" value="1"/>
</dbReference>
<dbReference type="SUPFAM" id="SSF56112">
    <property type="entry name" value="Protein kinase-like (PK-like)"/>
    <property type="match status" value="1"/>
</dbReference>
<proteinExistence type="inferred from homology"/>
<evidence type="ECO:0000250" key="1"/>
<evidence type="ECO:0000305" key="2"/>
<comment type="function">
    <text evidence="1">Catalyzes the ATP-dependent phosphorylation of maltose to maltose 1-phosphate. Is involved in a branched alpha-glucan biosynthetic pathway from trehalose, together with TreS, GlgE and GlgB (By similarity).</text>
</comment>
<comment type="catalytic activity">
    <reaction>
        <text>D-maltose + ATP = alpha-maltose 1-phosphate + ADP + H(+)</text>
        <dbReference type="Rhea" id="RHEA:31915"/>
        <dbReference type="ChEBI" id="CHEBI:15378"/>
        <dbReference type="ChEBI" id="CHEBI:17306"/>
        <dbReference type="ChEBI" id="CHEBI:30616"/>
        <dbReference type="ChEBI" id="CHEBI:63576"/>
        <dbReference type="ChEBI" id="CHEBI:456216"/>
        <dbReference type="EC" id="2.7.1.175"/>
    </reaction>
</comment>
<comment type="pathway">
    <text>Glycan biosynthesis; glycogen biosynthesis.</text>
</comment>
<comment type="subunit">
    <text evidence="1">Monomer.</text>
</comment>
<comment type="similarity">
    <text evidence="2">Belongs to the aminoglycoside phosphotransferase family.</text>
</comment>
<feature type="chain" id="PRO_0000412890" description="Maltokinase">
    <location>
        <begin position="1"/>
        <end position="444"/>
    </location>
</feature>